<protein>
    <recommendedName>
        <fullName evidence="7">Sensor histidine kinase LnrJ</fullName>
        <ecNumber evidence="1">2.7.13.3</ecNumber>
    </recommendedName>
</protein>
<comment type="function">
    <text evidence="3 4 5">Required for resistance to linearmycins, a family of antibiotic-specialized metabolites produced by some streptomycetes (PubMed:26647299, PubMed:28461449). Member of the two-component regulatory system LnrJ/LnrK, which induces expression of the LnrLMN ABC transporter in response to linearmycins and other polyenes (PubMed:11717295, PubMed:26647299, PubMed:28461449). Acts as a specific sensor for linearmycin, either directly through binding or indirectly through membrane perturbation. Probably activates LnrK by phosphorylation (PubMed:28461449). May also promote biofilm formation (PubMed:28461449).</text>
</comment>
<comment type="catalytic activity">
    <reaction evidence="1">
        <text>ATP + protein L-histidine = ADP + protein N-phospho-L-histidine.</text>
        <dbReference type="EC" id="2.7.13.3"/>
    </reaction>
</comment>
<comment type="subcellular location">
    <subcellularLocation>
        <location evidence="7">Cell membrane</location>
        <topology evidence="2">Multi-pass membrane protein</topology>
    </subcellularLocation>
</comment>
<comment type="PTM">
    <text evidence="1">Autophosphorylated.</text>
</comment>
<comment type="disruption phenotype">
    <text evidence="4">Deletion mutant does not show any observable phenotype.</text>
</comment>
<reference key="1">
    <citation type="journal article" date="1996" name="Gene">
        <title>The Bacillus subtilis chromosome region near 78 degrees contains the genes encoding a new two-component system, three ABC transporters and a lipase.</title>
        <authorList>
            <person name="Yamamoto H."/>
            <person name="Uchiyama S."/>
            <person name="Sekiguchi J."/>
        </authorList>
    </citation>
    <scope>NUCLEOTIDE SEQUENCE [GENOMIC DNA]</scope>
    <source>
        <strain>168 / AC327</strain>
    </source>
</reference>
<reference key="2">
    <citation type="journal article" date="1997" name="Nature">
        <title>The complete genome sequence of the Gram-positive bacterium Bacillus subtilis.</title>
        <authorList>
            <person name="Kunst F."/>
            <person name="Ogasawara N."/>
            <person name="Moszer I."/>
            <person name="Albertini A.M."/>
            <person name="Alloni G."/>
            <person name="Azevedo V."/>
            <person name="Bertero M.G."/>
            <person name="Bessieres P."/>
            <person name="Bolotin A."/>
            <person name="Borchert S."/>
            <person name="Borriss R."/>
            <person name="Boursier L."/>
            <person name="Brans A."/>
            <person name="Braun M."/>
            <person name="Brignell S.C."/>
            <person name="Bron S."/>
            <person name="Brouillet S."/>
            <person name="Bruschi C.V."/>
            <person name="Caldwell B."/>
            <person name="Capuano V."/>
            <person name="Carter N.M."/>
            <person name="Choi S.-K."/>
            <person name="Codani J.-J."/>
            <person name="Connerton I.F."/>
            <person name="Cummings N.J."/>
            <person name="Daniel R.A."/>
            <person name="Denizot F."/>
            <person name="Devine K.M."/>
            <person name="Duesterhoeft A."/>
            <person name="Ehrlich S.D."/>
            <person name="Emmerson P.T."/>
            <person name="Entian K.-D."/>
            <person name="Errington J."/>
            <person name="Fabret C."/>
            <person name="Ferrari E."/>
            <person name="Foulger D."/>
            <person name="Fritz C."/>
            <person name="Fujita M."/>
            <person name="Fujita Y."/>
            <person name="Fuma S."/>
            <person name="Galizzi A."/>
            <person name="Galleron N."/>
            <person name="Ghim S.-Y."/>
            <person name="Glaser P."/>
            <person name="Goffeau A."/>
            <person name="Golightly E.J."/>
            <person name="Grandi G."/>
            <person name="Guiseppi G."/>
            <person name="Guy B.J."/>
            <person name="Haga K."/>
            <person name="Haiech J."/>
            <person name="Harwood C.R."/>
            <person name="Henaut A."/>
            <person name="Hilbert H."/>
            <person name="Holsappel S."/>
            <person name="Hosono S."/>
            <person name="Hullo M.-F."/>
            <person name="Itaya M."/>
            <person name="Jones L.-M."/>
            <person name="Joris B."/>
            <person name="Karamata D."/>
            <person name="Kasahara Y."/>
            <person name="Klaerr-Blanchard M."/>
            <person name="Klein C."/>
            <person name="Kobayashi Y."/>
            <person name="Koetter P."/>
            <person name="Koningstein G."/>
            <person name="Krogh S."/>
            <person name="Kumano M."/>
            <person name="Kurita K."/>
            <person name="Lapidus A."/>
            <person name="Lardinois S."/>
            <person name="Lauber J."/>
            <person name="Lazarevic V."/>
            <person name="Lee S.-M."/>
            <person name="Levine A."/>
            <person name="Liu H."/>
            <person name="Masuda S."/>
            <person name="Mauel C."/>
            <person name="Medigue C."/>
            <person name="Medina N."/>
            <person name="Mellado R.P."/>
            <person name="Mizuno M."/>
            <person name="Moestl D."/>
            <person name="Nakai S."/>
            <person name="Noback M."/>
            <person name="Noone D."/>
            <person name="O'Reilly M."/>
            <person name="Ogawa K."/>
            <person name="Ogiwara A."/>
            <person name="Oudega B."/>
            <person name="Park S.-H."/>
            <person name="Parro V."/>
            <person name="Pohl T.M."/>
            <person name="Portetelle D."/>
            <person name="Porwollik S."/>
            <person name="Prescott A.M."/>
            <person name="Presecan E."/>
            <person name="Pujic P."/>
            <person name="Purnelle B."/>
            <person name="Rapoport G."/>
            <person name="Rey M."/>
            <person name="Reynolds S."/>
            <person name="Rieger M."/>
            <person name="Rivolta C."/>
            <person name="Rocha E."/>
            <person name="Roche B."/>
            <person name="Rose M."/>
            <person name="Sadaie Y."/>
            <person name="Sato T."/>
            <person name="Scanlan E."/>
            <person name="Schleich S."/>
            <person name="Schroeter R."/>
            <person name="Scoffone F."/>
            <person name="Sekiguchi J."/>
            <person name="Sekowska A."/>
            <person name="Seror S.J."/>
            <person name="Serror P."/>
            <person name="Shin B.-S."/>
            <person name="Soldo B."/>
            <person name="Sorokin A."/>
            <person name="Tacconi E."/>
            <person name="Takagi T."/>
            <person name="Takahashi H."/>
            <person name="Takemaru K."/>
            <person name="Takeuchi M."/>
            <person name="Tamakoshi A."/>
            <person name="Tanaka T."/>
            <person name="Terpstra P."/>
            <person name="Tognoni A."/>
            <person name="Tosato V."/>
            <person name="Uchiyama S."/>
            <person name="Vandenbol M."/>
            <person name="Vannier F."/>
            <person name="Vassarotti A."/>
            <person name="Viari A."/>
            <person name="Wambutt R."/>
            <person name="Wedler E."/>
            <person name="Wedler H."/>
            <person name="Weitzenegger T."/>
            <person name="Winters P."/>
            <person name="Wipat A."/>
            <person name="Yamamoto H."/>
            <person name="Yamane K."/>
            <person name="Yasumoto K."/>
            <person name="Yata K."/>
            <person name="Yoshida K."/>
            <person name="Yoshikawa H.-F."/>
            <person name="Zumstein E."/>
            <person name="Yoshikawa H."/>
            <person name="Danchin A."/>
        </authorList>
    </citation>
    <scope>NUCLEOTIDE SEQUENCE [LARGE SCALE GENOMIC DNA]</scope>
    <source>
        <strain>168</strain>
    </source>
</reference>
<reference key="3">
    <citation type="journal article" date="2001" name="J. Bacteriol.">
        <title>Comprehensive DNA microarray analysis of Bacillus subtilis two-component regulatory systems.</title>
        <authorList>
            <person name="Kobayashi K."/>
            <person name="Ogura M."/>
            <person name="Yamaguchi H."/>
            <person name="Yoshida K."/>
            <person name="Ogasawara N."/>
            <person name="Tanaka T."/>
            <person name="Fujita Y."/>
        </authorList>
    </citation>
    <scope>FUNCTION</scope>
</reference>
<reference key="4">
    <citation type="journal article" date="2015" name="PLoS Genet.">
        <title>Escape from lethal bacterial competition through coupled activation of antibiotic resistance and a mobilized subpopulation.</title>
        <authorList>
            <person name="Stubbendieck R.M."/>
            <person name="Straight P.D."/>
        </authorList>
    </citation>
    <scope>FUNCTION</scope>
    <scope>DISRUPTION PHENOTYPE</scope>
    <scope>MUTAGENESIS OF HIS-201</scope>
</reference>
<reference key="5">
    <citation type="journal article" date="2017" name="J. Bacteriol.">
        <title>Linearmycins activate a two-component signaling system involved in bacterial competition and biofilm morphology.</title>
        <authorList>
            <person name="Stubbendieck R.M."/>
            <person name="Straight P.D."/>
        </authorList>
    </citation>
    <scope>FUNCTION</scope>
</reference>
<sequence length="400" mass="44543">MKALFFTRMFTLMVSCLMYLSIVKEDNWFGYVFIAAGAAMYAANHVLLTKETNAIWFCLIDIAIGFSFGFIFPGTGLFIIMLCPVAVAFFLRGFPKRTAWSVLCLSSILFLTVLIRTYAMFGNEFVIDHLTSMTFVVFCGVVGKLIRKLLDAQDTAKQQFQELTESHLALSAAHQELHLYAKQVEELTAIYERNRMAREIHDTVGHKMTALLVQLQLLREWQKRDSQKADETVGVCETLAREALDDVRLSVRTLQTENDPSLIESLKQLTEDFCKNAGVTTEFAVSGDPAIIPLSLHPTLIRTVQEALTNAKRHGGAAACSIQLACTTDSISLVIKDDGKGNPEAALGFGLLNMKKRAAEHGGMIRFESERDQGFTVNAEFSLANKKWSFGPVQQKESLS</sequence>
<organism>
    <name type="scientific">Bacillus subtilis (strain 168)</name>
    <dbReference type="NCBI Taxonomy" id="224308"/>
    <lineage>
        <taxon>Bacteria</taxon>
        <taxon>Bacillati</taxon>
        <taxon>Bacillota</taxon>
        <taxon>Bacilli</taxon>
        <taxon>Bacillales</taxon>
        <taxon>Bacillaceae</taxon>
        <taxon>Bacillus</taxon>
    </lineage>
</organism>
<feature type="chain" id="PRO_0000360783" description="Sensor histidine kinase LnrJ">
    <location>
        <begin position="1"/>
        <end position="400"/>
    </location>
</feature>
<feature type="topological domain" description="Extracellular" evidence="2">
    <location>
        <begin position="1"/>
        <end position="2"/>
    </location>
</feature>
<feature type="transmembrane region" description="Helical" evidence="2">
    <location>
        <begin position="3"/>
        <end position="23"/>
    </location>
</feature>
<feature type="topological domain" description="Cytoplasmic" evidence="2">
    <location>
        <begin position="24"/>
        <end position="27"/>
    </location>
</feature>
<feature type="transmembrane region" description="Helical" evidence="2">
    <location>
        <begin position="28"/>
        <end position="48"/>
    </location>
</feature>
<feature type="topological domain" description="Extracellular" evidence="2">
    <location>
        <begin position="49"/>
        <end position="61"/>
    </location>
</feature>
<feature type="transmembrane region" description="Helical" evidence="2">
    <location>
        <begin position="62"/>
        <end position="82"/>
    </location>
</feature>
<feature type="topological domain" description="Cytoplasmic" evidence="2">
    <location>
        <begin position="83"/>
        <end position="101"/>
    </location>
</feature>
<feature type="transmembrane region" description="Helical" evidence="2">
    <location>
        <begin position="102"/>
        <end position="122"/>
    </location>
</feature>
<feature type="topological domain" description="Extracellular" evidence="2">
    <location>
        <begin position="123"/>
        <end position="125"/>
    </location>
</feature>
<feature type="transmembrane region" description="Helical" evidence="2">
    <location>
        <begin position="126"/>
        <end position="146"/>
    </location>
</feature>
<feature type="topological domain" description="Cytoplasmic" evidence="2">
    <location>
        <begin position="147"/>
        <end position="400"/>
    </location>
</feature>
<feature type="domain" description="Histidine kinase" evidence="2">
    <location>
        <begin position="190"/>
        <end position="385"/>
    </location>
</feature>
<feature type="modified residue" description="Phosphohistidine; by autocatalysis" evidence="1">
    <location>
        <position position="201"/>
    </location>
</feature>
<feature type="mutagenesis site" description="Mutant is sensitive to linearmycins." evidence="4">
    <original>H</original>
    <variation>N</variation>
    <location>
        <position position="201"/>
    </location>
</feature>
<keyword id="KW-0067">ATP-binding</keyword>
<keyword id="KW-1003">Cell membrane</keyword>
<keyword id="KW-0418">Kinase</keyword>
<keyword id="KW-0472">Membrane</keyword>
<keyword id="KW-0547">Nucleotide-binding</keyword>
<keyword id="KW-0597">Phosphoprotein</keyword>
<keyword id="KW-1185">Reference proteome</keyword>
<keyword id="KW-0808">Transferase</keyword>
<keyword id="KW-0812">Transmembrane</keyword>
<keyword id="KW-1133">Transmembrane helix</keyword>
<keyword id="KW-0902">Two-component regulatory system</keyword>
<proteinExistence type="evidence at protein level"/>
<dbReference type="EC" id="2.7.13.3" evidence="1"/>
<dbReference type="EMBL" id="D78508">
    <property type="protein sequence ID" value="BAA11400.1"/>
    <property type="molecule type" value="Genomic_DNA"/>
</dbReference>
<dbReference type="EMBL" id="AL009126">
    <property type="protein sequence ID" value="CAB12658.1"/>
    <property type="molecule type" value="Genomic_DNA"/>
</dbReference>
<dbReference type="PIR" id="JC5358">
    <property type="entry name" value="JC5358"/>
</dbReference>
<dbReference type="RefSeq" id="NP_388710.1">
    <property type="nucleotide sequence ID" value="NC_000964.3"/>
</dbReference>
<dbReference type="RefSeq" id="WP_009966811.1">
    <property type="nucleotide sequence ID" value="NZ_OZ025638.1"/>
</dbReference>
<dbReference type="SMR" id="P94438"/>
<dbReference type="FunCoup" id="P94438">
    <property type="interactions" value="37"/>
</dbReference>
<dbReference type="STRING" id="224308.BSU08290"/>
<dbReference type="PaxDb" id="224308-BSU08290"/>
<dbReference type="EnsemblBacteria" id="CAB12658">
    <property type="protein sequence ID" value="CAB12658"/>
    <property type="gene ID" value="BSU_08290"/>
</dbReference>
<dbReference type="GeneID" id="936171"/>
<dbReference type="KEGG" id="bsu:BSU08290"/>
<dbReference type="PATRIC" id="fig|224308.179.peg.895"/>
<dbReference type="eggNOG" id="COG4585">
    <property type="taxonomic scope" value="Bacteria"/>
</dbReference>
<dbReference type="InParanoid" id="P94438"/>
<dbReference type="OrthoDB" id="199946at2"/>
<dbReference type="PhylomeDB" id="P94438"/>
<dbReference type="BioCyc" id="BSUB:BSU08290-MONOMER"/>
<dbReference type="Proteomes" id="UP000001570">
    <property type="component" value="Chromosome"/>
</dbReference>
<dbReference type="GO" id="GO:0005886">
    <property type="term" value="C:plasma membrane"/>
    <property type="evidence" value="ECO:0000318"/>
    <property type="project" value="GO_Central"/>
</dbReference>
<dbReference type="GO" id="GO:0005524">
    <property type="term" value="F:ATP binding"/>
    <property type="evidence" value="ECO:0007669"/>
    <property type="project" value="UniProtKB-KW"/>
</dbReference>
<dbReference type="GO" id="GO:0000155">
    <property type="term" value="F:phosphorelay sensor kinase activity"/>
    <property type="evidence" value="ECO:0007669"/>
    <property type="project" value="InterPro"/>
</dbReference>
<dbReference type="GO" id="GO:0046983">
    <property type="term" value="F:protein dimerization activity"/>
    <property type="evidence" value="ECO:0007669"/>
    <property type="project" value="InterPro"/>
</dbReference>
<dbReference type="GO" id="GO:0004672">
    <property type="term" value="F:protein kinase activity"/>
    <property type="evidence" value="ECO:0000318"/>
    <property type="project" value="GO_Central"/>
</dbReference>
<dbReference type="CDD" id="cd16917">
    <property type="entry name" value="HATPase_UhpB-NarQ-NarX-like"/>
    <property type="match status" value="1"/>
</dbReference>
<dbReference type="Gene3D" id="1.20.5.1930">
    <property type="match status" value="1"/>
</dbReference>
<dbReference type="Gene3D" id="3.30.565.10">
    <property type="entry name" value="Histidine kinase-like ATPase, C-terminal domain"/>
    <property type="match status" value="1"/>
</dbReference>
<dbReference type="InterPro" id="IPR036890">
    <property type="entry name" value="HATPase_C_sf"/>
</dbReference>
<dbReference type="InterPro" id="IPR050482">
    <property type="entry name" value="Sensor_HK_TwoCompSys"/>
</dbReference>
<dbReference type="InterPro" id="IPR011712">
    <property type="entry name" value="Sig_transdc_His_kin_sub3_dim/P"/>
</dbReference>
<dbReference type="PANTHER" id="PTHR24421">
    <property type="entry name" value="NITRATE/NITRITE SENSOR PROTEIN NARX-RELATED"/>
    <property type="match status" value="1"/>
</dbReference>
<dbReference type="PANTHER" id="PTHR24421:SF10">
    <property type="entry name" value="NITRATE_NITRITE SENSOR PROTEIN NARQ"/>
    <property type="match status" value="1"/>
</dbReference>
<dbReference type="Pfam" id="PF02518">
    <property type="entry name" value="HATPase_c"/>
    <property type="match status" value="1"/>
</dbReference>
<dbReference type="Pfam" id="PF07730">
    <property type="entry name" value="HisKA_3"/>
    <property type="match status" value="1"/>
</dbReference>
<dbReference type="SMART" id="SM00387">
    <property type="entry name" value="HATPase_c"/>
    <property type="match status" value="1"/>
</dbReference>
<dbReference type="SUPFAM" id="SSF55874">
    <property type="entry name" value="ATPase domain of HSP90 chaperone/DNA topoisomerase II/histidine kinase"/>
    <property type="match status" value="1"/>
</dbReference>
<name>LNRJ_BACSU</name>
<accession>P94438</accession>
<accession>Q796Z9</accession>
<gene>
    <name evidence="6" type="primary">lnrJ</name>
    <name evidence="8" type="synonym">linJ</name>
    <name type="synonym">yfiJ</name>
    <name type="ordered locus">BSU08290</name>
</gene>
<evidence type="ECO:0000250" key="1">
    <source>
        <dbReference type="UniProtKB" id="P13799"/>
    </source>
</evidence>
<evidence type="ECO:0000255" key="2"/>
<evidence type="ECO:0000269" key="3">
    <source>
    </source>
</evidence>
<evidence type="ECO:0000269" key="4">
    <source>
    </source>
</evidence>
<evidence type="ECO:0000269" key="5">
    <source>
    </source>
</evidence>
<evidence type="ECO:0000303" key="6">
    <source>
    </source>
</evidence>
<evidence type="ECO:0000305" key="7"/>
<evidence type="ECO:0000312" key="8">
    <source>
        <dbReference type="EMBL" id="CAB12658.1"/>
    </source>
</evidence>